<comment type="function">
    <text evidence="1">Catalyzes the conversion of lactate to pyruvate.</text>
</comment>
<comment type="catalytic activity">
    <reaction evidence="1">
        <text>(S)-lactate + NAD(+) = pyruvate + NADH + H(+)</text>
        <dbReference type="Rhea" id="RHEA:23444"/>
        <dbReference type="ChEBI" id="CHEBI:15361"/>
        <dbReference type="ChEBI" id="CHEBI:15378"/>
        <dbReference type="ChEBI" id="CHEBI:16651"/>
        <dbReference type="ChEBI" id="CHEBI:57540"/>
        <dbReference type="ChEBI" id="CHEBI:57945"/>
        <dbReference type="EC" id="1.1.1.27"/>
    </reaction>
</comment>
<comment type="activity regulation">
    <text evidence="1">Allosterically activated by fructose 1,6-bisphosphate (FBP).</text>
</comment>
<comment type="pathway">
    <text evidence="1">Fermentation; pyruvate fermentation to lactate; (S)-lactate from pyruvate: step 1/1.</text>
</comment>
<comment type="subunit">
    <text evidence="1">Homotetramer.</text>
</comment>
<comment type="subcellular location">
    <subcellularLocation>
        <location evidence="1">Cytoplasm</location>
    </subcellularLocation>
</comment>
<comment type="similarity">
    <text evidence="1">Belongs to the LDH/MDH superfamily. LDH family.</text>
</comment>
<organism>
    <name type="scientific">Allorhizobium ampelinum (strain ATCC BAA-846 / DSM 112012 / S4)</name>
    <name type="common">Agrobacterium vitis (strain S4)</name>
    <dbReference type="NCBI Taxonomy" id="311402"/>
    <lineage>
        <taxon>Bacteria</taxon>
        <taxon>Pseudomonadati</taxon>
        <taxon>Pseudomonadota</taxon>
        <taxon>Alphaproteobacteria</taxon>
        <taxon>Hyphomicrobiales</taxon>
        <taxon>Rhizobiaceae</taxon>
        <taxon>Rhizobium/Agrobacterium group</taxon>
        <taxon>Allorhizobium</taxon>
        <taxon>Allorhizobium ampelinum</taxon>
    </lineage>
</organism>
<gene>
    <name evidence="1" type="primary">ldh</name>
    <name type="ordered locus">Avi_4103</name>
</gene>
<keyword id="KW-0021">Allosteric enzyme</keyword>
<keyword id="KW-0963">Cytoplasm</keyword>
<keyword id="KW-0520">NAD</keyword>
<keyword id="KW-0560">Oxidoreductase</keyword>
<keyword id="KW-1185">Reference proteome</keyword>
<dbReference type="EC" id="1.1.1.27" evidence="1"/>
<dbReference type="EMBL" id="CP000633">
    <property type="protein sequence ID" value="ACM37968.1"/>
    <property type="molecule type" value="Genomic_DNA"/>
</dbReference>
<dbReference type="RefSeq" id="WP_015917379.1">
    <property type="nucleotide sequence ID" value="NC_011989.1"/>
</dbReference>
<dbReference type="SMR" id="B9JTR0"/>
<dbReference type="STRING" id="311402.Avi_4103"/>
<dbReference type="KEGG" id="avi:Avi_4103"/>
<dbReference type="eggNOG" id="COG0039">
    <property type="taxonomic scope" value="Bacteria"/>
</dbReference>
<dbReference type="HOGENOM" id="CLU_045401_1_1_5"/>
<dbReference type="UniPathway" id="UPA00554">
    <property type="reaction ID" value="UER00611"/>
</dbReference>
<dbReference type="Proteomes" id="UP000001596">
    <property type="component" value="Chromosome 1"/>
</dbReference>
<dbReference type="GO" id="GO:0005737">
    <property type="term" value="C:cytoplasm"/>
    <property type="evidence" value="ECO:0007669"/>
    <property type="project" value="UniProtKB-SubCell"/>
</dbReference>
<dbReference type="GO" id="GO:0004459">
    <property type="term" value="F:L-lactate dehydrogenase activity"/>
    <property type="evidence" value="ECO:0007669"/>
    <property type="project" value="UniProtKB-UniRule"/>
</dbReference>
<dbReference type="GO" id="GO:0006096">
    <property type="term" value="P:glycolytic process"/>
    <property type="evidence" value="ECO:0007669"/>
    <property type="project" value="UniProtKB-UniRule"/>
</dbReference>
<dbReference type="GO" id="GO:0006089">
    <property type="term" value="P:lactate metabolic process"/>
    <property type="evidence" value="ECO:0007669"/>
    <property type="project" value="TreeGrafter"/>
</dbReference>
<dbReference type="CDD" id="cd05292">
    <property type="entry name" value="LDH_2"/>
    <property type="match status" value="1"/>
</dbReference>
<dbReference type="Gene3D" id="3.90.110.10">
    <property type="entry name" value="Lactate dehydrogenase/glycoside hydrolase, family 4, C-terminal"/>
    <property type="match status" value="1"/>
</dbReference>
<dbReference type="Gene3D" id="3.40.50.720">
    <property type="entry name" value="NAD(P)-binding Rossmann-like Domain"/>
    <property type="match status" value="1"/>
</dbReference>
<dbReference type="HAMAP" id="MF_00488">
    <property type="entry name" value="Lactate_dehydrog"/>
    <property type="match status" value="1"/>
</dbReference>
<dbReference type="InterPro" id="IPR001557">
    <property type="entry name" value="L-lactate/malate_DH"/>
</dbReference>
<dbReference type="InterPro" id="IPR011304">
    <property type="entry name" value="L-lactate_DH"/>
</dbReference>
<dbReference type="InterPro" id="IPR018177">
    <property type="entry name" value="L-lactate_DH_AS"/>
</dbReference>
<dbReference type="InterPro" id="IPR022383">
    <property type="entry name" value="Lactate/malate_DH_C"/>
</dbReference>
<dbReference type="InterPro" id="IPR001236">
    <property type="entry name" value="Lactate/malate_DH_N"/>
</dbReference>
<dbReference type="InterPro" id="IPR015955">
    <property type="entry name" value="Lactate_DH/Glyco_Ohase_4_C"/>
</dbReference>
<dbReference type="InterPro" id="IPR036291">
    <property type="entry name" value="NAD(P)-bd_dom_sf"/>
</dbReference>
<dbReference type="NCBIfam" id="TIGR01771">
    <property type="entry name" value="L-LDH-NAD"/>
    <property type="match status" value="1"/>
</dbReference>
<dbReference type="PANTHER" id="PTHR43128">
    <property type="entry name" value="L-2-HYDROXYCARBOXYLATE DEHYDROGENASE (NAD(P)(+))"/>
    <property type="match status" value="1"/>
</dbReference>
<dbReference type="PANTHER" id="PTHR43128:SF16">
    <property type="entry name" value="L-LACTATE DEHYDROGENASE"/>
    <property type="match status" value="1"/>
</dbReference>
<dbReference type="Pfam" id="PF02866">
    <property type="entry name" value="Ldh_1_C"/>
    <property type="match status" value="1"/>
</dbReference>
<dbReference type="Pfam" id="PF00056">
    <property type="entry name" value="Ldh_1_N"/>
    <property type="match status" value="1"/>
</dbReference>
<dbReference type="PIRSF" id="PIRSF000102">
    <property type="entry name" value="Lac_mal_DH"/>
    <property type="match status" value="1"/>
</dbReference>
<dbReference type="PRINTS" id="PR00086">
    <property type="entry name" value="LLDHDRGNASE"/>
</dbReference>
<dbReference type="SUPFAM" id="SSF56327">
    <property type="entry name" value="LDH C-terminal domain-like"/>
    <property type="match status" value="1"/>
</dbReference>
<dbReference type="SUPFAM" id="SSF51735">
    <property type="entry name" value="NAD(P)-binding Rossmann-fold domains"/>
    <property type="match status" value="1"/>
</dbReference>
<dbReference type="PROSITE" id="PS00064">
    <property type="entry name" value="L_LDH"/>
    <property type="match status" value="1"/>
</dbReference>
<protein>
    <recommendedName>
        <fullName evidence="1">L-lactate dehydrogenase</fullName>
        <shortName evidence="1">L-LDH</shortName>
        <ecNumber evidence="1">1.1.1.27</ecNumber>
    </recommendedName>
</protein>
<feature type="chain" id="PRO_1000190771" description="L-lactate dehydrogenase">
    <location>
        <begin position="1"/>
        <end position="310"/>
    </location>
</feature>
<feature type="active site" description="Proton acceptor" evidence="1">
    <location>
        <position position="172"/>
    </location>
</feature>
<feature type="binding site" evidence="1">
    <location>
        <position position="11"/>
    </location>
    <ligand>
        <name>NAD(+)</name>
        <dbReference type="ChEBI" id="CHEBI:57540"/>
    </ligand>
</feature>
<feature type="binding site" evidence="1">
    <location>
        <position position="32"/>
    </location>
    <ligand>
        <name>NAD(+)</name>
        <dbReference type="ChEBI" id="CHEBI:57540"/>
    </ligand>
</feature>
<feature type="binding site" evidence="1">
    <location>
        <position position="62"/>
    </location>
    <ligand>
        <name>NAD(+)</name>
        <dbReference type="ChEBI" id="CHEBI:57540"/>
    </ligand>
</feature>
<feature type="binding site" evidence="1">
    <location>
        <begin position="76"/>
        <end position="77"/>
    </location>
    <ligand>
        <name>NAD(+)</name>
        <dbReference type="ChEBI" id="CHEBI:57540"/>
    </ligand>
</feature>
<feature type="binding site" evidence="1">
    <location>
        <position position="79"/>
    </location>
    <ligand>
        <name>substrate</name>
    </ligand>
</feature>
<feature type="binding site" evidence="1">
    <location>
        <position position="85"/>
    </location>
    <ligand>
        <name>substrate</name>
    </ligand>
</feature>
<feature type="binding site" evidence="1">
    <location>
        <begin position="115"/>
        <end position="117"/>
    </location>
    <ligand>
        <name>NAD(+)</name>
        <dbReference type="ChEBI" id="CHEBI:57540"/>
    </ligand>
</feature>
<feature type="binding site" evidence="1">
    <location>
        <begin position="117"/>
        <end position="120"/>
    </location>
    <ligand>
        <name>substrate</name>
    </ligand>
</feature>
<feature type="binding site" evidence="1">
    <location>
        <position position="140"/>
    </location>
    <ligand>
        <name>NAD(+)</name>
        <dbReference type="ChEBI" id="CHEBI:57540"/>
    </ligand>
</feature>
<feature type="binding site" evidence="1">
    <location>
        <begin position="145"/>
        <end position="148"/>
    </location>
    <ligand>
        <name>substrate</name>
    </ligand>
</feature>
<feature type="binding site" evidence="1">
    <location>
        <position position="150"/>
    </location>
    <ligand>
        <name>beta-D-fructose 1,6-bisphosphate</name>
        <dbReference type="ChEBI" id="CHEBI:32966"/>
        <note>allosteric activator</note>
    </ligand>
</feature>
<feature type="binding site" evidence="1">
    <location>
        <position position="165"/>
    </location>
    <ligand>
        <name>beta-D-fructose 1,6-bisphosphate</name>
        <dbReference type="ChEBI" id="CHEBI:32966"/>
        <note>allosteric activator</note>
    </ligand>
</feature>
<feature type="binding site" evidence="1">
    <location>
        <position position="227"/>
    </location>
    <ligand>
        <name>substrate</name>
    </ligand>
</feature>
<accession>B9JTR0</accession>
<proteinExistence type="inferred from homology"/>
<sequence>MKVGIVGAGMVGSASAYALTMLGIASEIVLVDYNTDLAQAQAEDISHAVPFVSATLVRAGDYGDFAGAGVVIISAGVSQKRGETRLELLGRNAEVFRQVVDQVLAAAPNAILLIASNPVDIMTDIATRLSGLAPQRVIGSGTILDTARFRSLLGRYLEISPQSVHAYVLGEHGDSEVLAWSNAMVGAVPLMSFAKQAGKPVTDTVRSEIDAGVRHAADKIIKGKGATYYGIGAGLARIVKAIASDQRDVLSVSSVTAELAGVTNVAASVPRVIGSSGILMDLVPDLDETERIALAKSARMLKDLALSVPC</sequence>
<evidence type="ECO:0000255" key="1">
    <source>
        <dbReference type="HAMAP-Rule" id="MF_00488"/>
    </source>
</evidence>
<reference key="1">
    <citation type="journal article" date="2009" name="J. Bacteriol.">
        <title>Genome sequences of three Agrobacterium biovars help elucidate the evolution of multichromosome genomes in bacteria.</title>
        <authorList>
            <person name="Slater S.C."/>
            <person name="Goldman B.S."/>
            <person name="Goodner B."/>
            <person name="Setubal J.C."/>
            <person name="Farrand S.K."/>
            <person name="Nester E.W."/>
            <person name="Burr T.J."/>
            <person name="Banta L."/>
            <person name="Dickerman A.W."/>
            <person name="Paulsen I."/>
            <person name="Otten L."/>
            <person name="Suen G."/>
            <person name="Welch R."/>
            <person name="Almeida N.F."/>
            <person name="Arnold F."/>
            <person name="Burton O.T."/>
            <person name="Du Z."/>
            <person name="Ewing A."/>
            <person name="Godsy E."/>
            <person name="Heisel S."/>
            <person name="Houmiel K.L."/>
            <person name="Jhaveri J."/>
            <person name="Lu J."/>
            <person name="Miller N.M."/>
            <person name="Norton S."/>
            <person name="Chen Q."/>
            <person name="Phoolcharoen W."/>
            <person name="Ohlin V."/>
            <person name="Ondrusek D."/>
            <person name="Pride N."/>
            <person name="Stricklin S.L."/>
            <person name="Sun J."/>
            <person name="Wheeler C."/>
            <person name="Wilson L."/>
            <person name="Zhu H."/>
            <person name="Wood D.W."/>
        </authorList>
    </citation>
    <scope>NUCLEOTIDE SEQUENCE [LARGE SCALE GENOMIC DNA]</scope>
    <source>
        <strain>ATCC BAA-846 / DSM 112012 / S4</strain>
    </source>
</reference>
<name>LDH_ALLAM</name>